<sequence length="484" mass="52462">MSMAASSSTATVQPSGIITQPPPPSTLREQRIATHSHIKGLGLADDGTAMSSSQGFIGQILAREALGLHLSLLKGGKYSGRPLLLVGPPGTGKTALALALSQELGSKVPFCAMVGSEVYSGEVKKTEVLGSCFRRAIGLRIKETKEVYEGEVTELTPSEAENPLSGYGKTISHVIVGLKTVKGTKQLRLDPSVYESIQKERVVVGDVIYIEANTGAVKRVGRSDAYASEYDLEAEEYVPLPKGDVHKRKELVQDVTLHDLDMANARPQGGQDIMSVMGQLVKGGRTEVTDKLRREINKVVDRYIEQGVAELVPGVLFIDEVHMLDMECFTYLNRALESPMSPYVVLASNRGISTIRGTEYDGVAGSASEGIRAPHGLPVDLLDRCMIVKTQLYTRDEIRRIVEMRCKVEGIAISSEAVDKLADEGERSSLRYALQLLTPAGIVSKNKGKGEVGVADVEELGELFLDAKRSAGVLRSTEDFEKRY</sequence>
<name>RUVB1_CRYNJ</name>
<reference key="1">
    <citation type="journal article" date="2005" name="Science">
        <title>The genome of the basidiomycetous yeast and human pathogen Cryptococcus neoformans.</title>
        <authorList>
            <person name="Loftus B.J."/>
            <person name="Fung E."/>
            <person name="Roncaglia P."/>
            <person name="Rowley D."/>
            <person name="Amedeo P."/>
            <person name="Bruno D."/>
            <person name="Vamathevan J."/>
            <person name="Miranda M."/>
            <person name="Anderson I.J."/>
            <person name="Fraser J.A."/>
            <person name="Allen J.E."/>
            <person name="Bosdet I.E."/>
            <person name="Brent M.R."/>
            <person name="Chiu R."/>
            <person name="Doering T.L."/>
            <person name="Donlin M.J."/>
            <person name="D'Souza C.A."/>
            <person name="Fox D.S."/>
            <person name="Grinberg V."/>
            <person name="Fu J."/>
            <person name="Fukushima M."/>
            <person name="Haas B.J."/>
            <person name="Huang J.C."/>
            <person name="Janbon G."/>
            <person name="Jones S.J.M."/>
            <person name="Koo H.L."/>
            <person name="Krzywinski M.I."/>
            <person name="Kwon-Chung K.J."/>
            <person name="Lengeler K.B."/>
            <person name="Maiti R."/>
            <person name="Marra M.A."/>
            <person name="Marra R.E."/>
            <person name="Mathewson C.A."/>
            <person name="Mitchell T.G."/>
            <person name="Pertea M."/>
            <person name="Riggs F.R."/>
            <person name="Salzberg S.L."/>
            <person name="Schein J.E."/>
            <person name="Shvartsbeyn A."/>
            <person name="Shin H."/>
            <person name="Shumway M."/>
            <person name="Specht C.A."/>
            <person name="Suh B.B."/>
            <person name="Tenney A."/>
            <person name="Utterback T.R."/>
            <person name="Wickes B.L."/>
            <person name="Wortman J.R."/>
            <person name="Wye N.H."/>
            <person name="Kronstad J.W."/>
            <person name="Lodge J.K."/>
            <person name="Heitman J."/>
            <person name="Davis R.W."/>
            <person name="Fraser C.M."/>
            <person name="Hyman R.W."/>
        </authorList>
    </citation>
    <scope>NUCLEOTIDE SEQUENCE [LARGE SCALE GENOMIC DNA]</scope>
    <source>
        <strain>JEC21 / ATCC MYA-565</strain>
    </source>
</reference>
<organism>
    <name type="scientific">Cryptococcus neoformans var. neoformans serotype D (strain JEC21 / ATCC MYA-565)</name>
    <name type="common">Filobasidiella neoformans</name>
    <dbReference type="NCBI Taxonomy" id="214684"/>
    <lineage>
        <taxon>Eukaryota</taxon>
        <taxon>Fungi</taxon>
        <taxon>Dikarya</taxon>
        <taxon>Basidiomycota</taxon>
        <taxon>Agaricomycotina</taxon>
        <taxon>Tremellomycetes</taxon>
        <taxon>Tremellales</taxon>
        <taxon>Cryptococcaceae</taxon>
        <taxon>Cryptococcus</taxon>
        <taxon>Cryptococcus neoformans species complex</taxon>
    </lineage>
</organism>
<comment type="function">
    <text evidence="1">DNA helicase which participates in several chromatin remodeling complexes, including the SWR1 and the INO80 complexes. The SWR1 complex mediates the ATP-dependent exchange of histone H2A for the H2A variant HZT1 leading to transcriptional regulation of selected genes by chromatin remodeling. The INO80 complex remodels chromatin by shifting nucleosomes and is involved in DNA repair. Also involved in pre-rRNA processing (By similarity).</text>
</comment>
<comment type="catalytic activity">
    <reaction>
        <text>ATP + H2O = ADP + phosphate + H(+)</text>
        <dbReference type="Rhea" id="RHEA:13065"/>
        <dbReference type="ChEBI" id="CHEBI:15377"/>
        <dbReference type="ChEBI" id="CHEBI:15378"/>
        <dbReference type="ChEBI" id="CHEBI:30616"/>
        <dbReference type="ChEBI" id="CHEBI:43474"/>
        <dbReference type="ChEBI" id="CHEBI:456216"/>
        <dbReference type="EC" id="3.6.4.12"/>
    </reaction>
</comment>
<comment type="subunit">
    <text evidence="1">May form heterododecamers with RVB2. Component of the SWR1 chromatin remodeling complex, the INO80 chromatin remodeling complex, and of the R2TP complex (By similarity).</text>
</comment>
<comment type="subcellular location">
    <subcellularLocation>
        <location evidence="1">Nucleus</location>
    </subcellularLocation>
</comment>
<comment type="similarity">
    <text evidence="3">Belongs to the RuvB family.</text>
</comment>
<feature type="chain" id="PRO_0000165652" description="RuvB-like helicase 1">
    <location>
        <begin position="1"/>
        <end position="484"/>
    </location>
</feature>
<feature type="region of interest" description="Disordered" evidence="2">
    <location>
        <begin position="1"/>
        <end position="27"/>
    </location>
</feature>
<feature type="compositionally biased region" description="Low complexity" evidence="2">
    <location>
        <begin position="1"/>
        <end position="11"/>
    </location>
</feature>
<feature type="binding site" evidence="1">
    <location>
        <begin position="87"/>
        <end position="94"/>
    </location>
    <ligand>
        <name>ATP</name>
        <dbReference type="ChEBI" id="CHEBI:30616"/>
    </ligand>
</feature>
<gene>
    <name type="primary">RVB1</name>
    <name type="ordered locus">CNA00990</name>
</gene>
<dbReference type="EC" id="3.6.4.12"/>
<dbReference type="EMBL" id="AE017341">
    <property type="protein sequence ID" value="AAW40710.1"/>
    <property type="molecule type" value="Genomic_DNA"/>
</dbReference>
<dbReference type="RefSeq" id="XP_566529.1">
    <property type="nucleotide sequence ID" value="XM_566529.1"/>
</dbReference>
<dbReference type="SMR" id="P0CR26"/>
<dbReference type="FunCoup" id="P0CR26">
    <property type="interactions" value="683"/>
</dbReference>
<dbReference type="STRING" id="214684.P0CR26"/>
<dbReference type="PaxDb" id="214684-P0CR26"/>
<dbReference type="EnsemblFungi" id="AAW40710">
    <property type="protein sequence ID" value="AAW40710"/>
    <property type="gene ID" value="CNA00990"/>
</dbReference>
<dbReference type="GeneID" id="3253447"/>
<dbReference type="KEGG" id="cne:CNA00990"/>
<dbReference type="VEuPathDB" id="FungiDB:CNA00990"/>
<dbReference type="eggNOG" id="KOG1942">
    <property type="taxonomic scope" value="Eukaryota"/>
</dbReference>
<dbReference type="HOGENOM" id="CLU_028311_1_1_1"/>
<dbReference type="InParanoid" id="P0CR26"/>
<dbReference type="OMA" id="RTLPYNK"/>
<dbReference type="OrthoDB" id="10060499at2759"/>
<dbReference type="Proteomes" id="UP000002149">
    <property type="component" value="Chromosome 1"/>
</dbReference>
<dbReference type="GO" id="GO:0031011">
    <property type="term" value="C:Ino80 complex"/>
    <property type="evidence" value="ECO:0000318"/>
    <property type="project" value="GO_Central"/>
</dbReference>
<dbReference type="GO" id="GO:0035267">
    <property type="term" value="C:NuA4 histone acetyltransferase complex"/>
    <property type="evidence" value="ECO:0000318"/>
    <property type="project" value="GO_Central"/>
</dbReference>
<dbReference type="GO" id="GO:0097255">
    <property type="term" value="C:R2TP complex"/>
    <property type="evidence" value="ECO:0000318"/>
    <property type="project" value="GO_Central"/>
</dbReference>
<dbReference type="GO" id="GO:0000812">
    <property type="term" value="C:Swr1 complex"/>
    <property type="evidence" value="ECO:0000318"/>
    <property type="project" value="GO_Central"/>
</dbReference>
<dbReference type="GO" id="GO:0043138">
    <property type="term" value="F:3'-5' DNA helicase activity"/>
    <property type="evidence" value="ECO:0007669"/>
    <property type="project" value="EnsemblFungi"/>
</dbReference>
<dbReference type="GO" id="GO:0043139">
    <property type="term" value="F:5'-3' DNA helicase activity"/>
    <property type="evidence" value="ECO:0007669"/>
    <property type="project" value="EnsemblFungi"/>
</dbReference>
<dbReference type="GO" id="GO:0005524">
    <property type="term" value="F:ATP binding"/>
    <property type="evidence" value="ECO:0007669"/>
    <property type="project" value="UniProtKB-KW"/>
</dbReference>
<dbReference type="GO" id="GO:0016887">
    <property type="term" value="F:ATP hydrolysis activity"/>
    <property type="evidence" value="ECO:0007669"/>
    <property type="project" value="InterPro"/>
</dbReference>
<dbReference type="GO" id="GO:0003678">
    <property type="term" value="F:DNA helicase activity"/>
    <property type="evidence" value="ECO:0000318"/>
    <property type="project" value="GO_Central"/>
</dbReference>
<dbReference type="GO" id="GO:0000492">
    <property type="term" value="P:box C/D snoRNP assembly"/>
    <property type="evidence" value="ECO:0000318"/>
    <property type="project" value="GO_Central"/>
</dbReference>
<dbReference type="GO" id="GO:0006338">
    <property type="term" value="P:chromatin remodeling"/>
    <property type="evidence" value="ECO:0000318"/>
    <property type="project" value="GO_Central"/>
</dbReference>
<dbReference type="GO" id="GO:0006281">
    <property type="term" value="P:DNA repair"/>
    <property type="evidence" value="ECO:0007669"/>
    <property type="project" value="UniProtKB-KW"/>
</dbReference>
<dbReference type="GO" id="GO:0006357">
    <property type="term" value="P:regulation of transcription by RNA polymerase II"/>
    <property type="evidence" value="ECO:0000318"/>
    <property type="project" value="GO_Central"/>
</dbReference>
<dbReference type="CDD" id="cd00009">
    <property type="entry name" value="AAA"/>
    <property type="match status" value="1"/>
</dbReference>
<dbReference type="FunFam" id="1.10.8.60:FF:000010">
    <property type="entry name" value="RuvB-like helicase"/>
    <property type="match status" value="1"/>
</dbReference>
<dbReference type="FunFam" id="2.40.50.360:FF:000001">
    <property type="entry name" value="RuvB-like helicase"/>
    <property type="match status" value="1"/>
</dbReference>
<dbReference type="FunFam" id="3.40.50.300:FF:002334">
    <property type="entry name" value="RuvB-like helicase"/>
    <property type="match status" value="1"/>
</dbReference>
<dbReference type="Gene3D" id="1.10.8.60">
    <property type="match status" value="1"/>
</dbReference>
<dbReference type="Gene3D" id="3.40.50.300">
    <property type="entry name" value="P-loop containing nucleotide triphosphate hydrolases"/>
    <property type="match status" value="1"/>
</dbReference>
<dbReference type="Gene3D" id="2.40.50.360">
    <property type="entry name" value="RuvB-like helicase, domain II"/>
    <property type="match status" value="1"/>
</dbReference>
<dbReference type="InterPro" id="IPR003593">
    <property type="entry name" value="AAA+_ATPase"/>
</dbReference>
<dbReference type="InterPro" id="IPR027417">
    <property type="entry name" value="P-loop_NTPase"/>
</dbReference>
<dbReference type="InterPro" id="IPR027238">
    <property type="entry name" value="RuvB-like"/>
</dbReference>
<dbReference type="InterPro" id="IPR041048">
    <property type="entry name" value="RuvB-like_C"/>
</dbReference>
<dbReference type="InterPro" id="IPR042487">
    <property type="entry name" value="RuvBL1/2_DNA/RNA_bd_dom"/>
</dbReference>
<dbReference type="InterPro" id="IPR010339">
    <property type="entry name" value="TIP49_P-loop"/>
</dbReference>
<dbReference type="PANTHER" id="PTHR11093">
    <property type="entry name" value="RUVB-RELATED REPTIN AND PONTIN"/>
    <property type="match status" value="1"/>
</dbReference>
<dbReference type="Pfam" id="PF06068">
    <property type="entry name" value="TIP49"/>
    <property type="match status" value="1"/>
</dbReference>
<dbReference type="Pfam" id="PF17856">
    <property type="entry name" value="TIP49_C"/>
    <property type="match status" value="1"/>
</dbReference>
<dbReference type="SMART" id="SM00382">
    <property type="entry name" value="AAA"/>
    <property type="match status" value="1"/>
</dbReference>
<dbReference type="SUPFAM" id="SSF52540">
    <property type="entry name" value="P-loop containing nucleoside triphosphate hydrolases"/>
    <property type="match status" value="1"/>
</dbReference>
<keyword id="KW-0010">Activator</keyword>
<keyword id="KW-0067">ATP-binding</keyword>
<keyword id="KW-0156">Chromatin regulator</keyword>
<keyword id="KW-0227">DNA damage</keyword>
<keyword id="KW-0234">DNA repair</keyword>
<keyword id="KW-0347">Helicase</keyword>
<keyword id="KW-0378">Hydrolase</keyword>
<keyword id="KW-0547">Nucleotide-binding</keyword>
<keyword id="KW-0539">Nucleus</keyword>
<keyword id="KW-1185">Reference proteome</keyword>
<keyword id="KW-0804">Transcription</keyword>
<keyword id="KW-0805">Transcription regulation</keyword>
<proteinExistence type="inferred from homology"/>
<evidence type="ECO:0000250" key="1"/>
<evidence type="ECO:0000256" key="2">
    <source>
        <dbReference type="SAM" id="MobiDB-lite"/>
    </source>
</evidence>
<evidence type="ECO:0000305" key="3"/>
<accession>P0CR26</accession>
<accession>Q560Z7</accession>
<accession>Q5KPZ8</accession>
<protein>
    <recommendedName>
        <fullName>RuvB-like helicase 1</fullName>
        <ecNumber>3.6.4.12</ecNumber>
    </recommendedName>
</protein>